<keyword id="KW-0687">Ribonucleoprotein</keyword>
<keyword id="KW-0689">Ribosomal protein</keyword>
<organism>
    <name type="scientific">Clostridium perfringens (strain ATCC 13124 / DSM 756 / JCM 1290 / NCIMB 6125 / NCTC 8237 / Type A)</name>
    <dbReference type="NCBI Taxonomy" id="195103"/>
    <lineage>
        <taxon>Bacteria</taxon>
        <taxon>Bacillati</taxon>
        <taxon>Bacillota</taxon>
        <taxon>Clostridia</taxon>
        <taxon>Eubacteriales</taxon>
        <taxon>Clostridiaceae</taxon>
        <taxon>Clostridium</taxon>
    </lineage>
</organism>
<sequence>MLKVTLVKSLIGRKKDHIATAHALGLRKIGKTVEHEGTPQIKGMINKISYLLKVEEA</sequence>
<protein>
    <recommendedName>
        <fullName evidence="1">Large ribosomal subunit protein uL30</fullName>
    </recommendedName>
    <alternativeName>
        <fullName evidence="2">50S ribosomal protein L30</fullName>
    </alternativeName>
</protein>
<accession>Q0TMR4</accession>
<gene>
    <name evidence="1" type="primary">rpmD</name>
    <name type="ordered locus">CPF_2696</name>
</gene>
<evidence type="ECO:0000255" key="1">
    <source>
        <dbReference type="HAMAP-Rule" id="MF_01371"/>
    </source>
</evidence>
<evidence type="ECO:0000305" key="2"/>
<proteinExistence type="inferred from homology"/>
<dbReference type="EMBL" id="CP000246">
    <property type="protein sequence ID" value="ABG83561.1"/>
    <property type="molecule type" value="Genomic_DNA"/>
</dbReference>
<dbReference type="SMR" id="Q0TMR4"/>
<dbReference type="STRING" id="195103.CPF_2696"/>
<dbReference type="PaxDb" id="195103-CPF_2696"/>
<dbReference type="KEGG" id="cpf:CPF_2696"/>
<dbReference type="eggNOG" id="COG1841">
    <property type="taxonomic scope" value="Bacteria"/>
</dbReference>
<dbReference type="HOGENOM" id="CLU_131047_2_1_9"/>
<dbReference type="Proteomes" id="UP000001823">
    <property type="component" value="Chromosome"/>
</dbReference>
<dbReference type="GO" id="GO:0022625">
    <property type="term" value="C:cytosolic large ribosomal subunit"/>
    <property type="evidence" value="ECO:0007669"/>
    <property type="project" value="TreeGrafter"/>
</dbReference>
<dbReference type="GO" id="GO:0003735">
    <property type="term" value="F:structural constituent of ribosome"/>
    <property type="evidence" value="ECO:0007669"/>
    <property type="project" value="InterPro"/>
</dbReference>
<dbReference type="GO" id="GO:0006412">
    <property type="term" value="P:translation"/>
    <property type="evidence" value="ECO:0007669"/>
    <property type="project" value="UniProtKB-UniRule"/>
</dbReference>
<dbReference type="CDD" id="cd01658">
    <property type="entry name" value="Ribosomal_L30"/>
    <property type="match status" value="1"/>
</dbReference>
<dbReference type="FunFam" id="3.30.1390.20:FF:000001">
    <property type="entry name" value="50S ribosomal protein L30"/>
    <property type="match status" value="1"/>
</dbReference>
<dbReference type="Gene3D" id="3.30.1390.20">
    <property type="entry name" value="Ribosomal protein L30, ferredoxin-like fold domain"/>
    <property type="match status" value="1"/>
</dbReference>
<dbReference type="HAMAP" id="MF_01371_B">
    <property type="entry name" value="Ribosomal_uL30_B"/>
    <property type="match status" value="1"/>
</dbReference>
<dbReference type="InterPro" id="IPR036919">
    <property type="entry name" value="Ribo_uL30_ferredoxin-like_sf"/>
</dbReference>
<dbReference type="InterPro" id="IPR005996">
    <property type="entry name" value="Ribosomal_uL30_bac-type"/>
</dbReference>
<dbReference type="InterPro" id="IPR016082">
    <property type="entry name" value="Ribosomal_uL30_ferredoxin-like"/>
</dbReference>
<dbReference type="NCBIfam" id="TIGR01308">
    <property type="entry name" value="rpmD_bact"/>
    <property type="match status" value="1"/>
</dbReference>
<dbReference type="PANTHER" id="PTHR15892:SF2">
    <property type="entry name" value="LARGE RIBOSOMAL SUBUNIT PROTEIN UL30M"/>
    <property type="match status" value="1"/>
</dbReference>
<dbReference type="PANTHER" id="PTHR15892">
    <property type="entry name" value="MITOCHONDRIAL RIBOSOMAL PROTEIN L30"/>
    <property type="match status" value="1"/>
</dbReference>
<dbReference type="Pfam" id="PF00327">
    <property type="entry name" value="Ribosomal_L30"/>
    <property type="match status" value="1"/>
</dbReference>
<dbReference type="PIRSF" id="PIRSF002211">
    <property type="entry name" value="Ribosomal_L30_bac-type"/>
    <property type="match status" value="1"/>
</dbReference>
<dbReference type="SUPFAM" id="SSF55129">
    <property type="entry name" value="Ribosomal protein L30p/L7e"/>
    <property type="match status" value="1"/>
</dbReference>
<reference key="1">
    <citation type="journal article" date="2006" name="Genome Res.">
        <title>Skewed genomic variability in strains of the toxigenic bacterial pathogen, Clostridium perfringens.</title>
        <authorList>
            <person name="Myers G.S.A."/>
            <person name="Rasko D.A."/>
            <person name="Cheung J.K."/>
            <person name="Ravel J."/>
            <person name="Seshadri R."/>
            <person name="DeBoy R.T."/>
            <person name="Ren Q."/>
            <person name="Varga J."/>
            <person name="Awad M.M."/>
            <person name="Brinkac L.M."/>
            <person name="Daugherty S.C."/>
            <person name="Haft D.H."/>
            <person name="Dodson R.J."/>
            <person name="Madupu R."/>
            <person name="Nelson W.C."/>
            <person name="Rosovitz M.J."/>
            <person name="Sullivan S.A."/>
            <person name="Khouri H."/>
            <person name="Dimitrov G.I."/>
            <person name="Watkins K.L."/>
            <person name="Mulligan S."/>
            <person name="Benton J."/>
            <person name="Radune D."/>
            <person name="Fisher D.J."/>
            <person name="Atkins H.S."/>
            <person name="Hiscox T."/>
            <person name="Jost B.H."/>
            <person name="Billington S.J."/>
            <person name="Songer J.G."/>
            <person name="McClane B.A."/>
            <person name="Titball R.W."/>
            <person name="Rood J.I."/>
            <person name="Melville S.B."/>
            <person name="Paulsen I.T."/>
        </authorList>
    </citation>
    <scope>NUCLEOTIDE SEQUENCE [LARGE SCALE GENOMIC DNA]</scope>
    <source>
        <strain>ATCC 13124 / DSM 756 / JCM 1290 / NCIMB 6125 / NCTC 8237 / S 107 / Type A</strain>
    </source>
</reference>
<name>RL30_CLOP1</name>
<feature type="chain" id="PRO_0000273770" description="Large ribosomal subunit protein uL30">
    <location>
        <begin position="1"/>
        <end position="57"/>
    </location>
</feature>
<comment type="subunit">
    <text evidence="1">Part of the 50S ribosomal subunit.</text>
</comment>
<comment type="similarity">
    <text evidence="1">Belongs to the universal ribosomal protein uL30 family.</text>
</comment>